<accession>B6J134</accession>
<proteinExistence type="inferred from homology"/>
<name>RISB_COXB2</name>
<comment type="function">
    <text evidence="1">Catalyzes the formation of 6,7-dimethyl-8-ribityllumazine by condensation of 5-amino-6-(D-ribitylamino)uracil with 3,4-dihydroxy-2-butanone 4-phosphate. This is the penultimate step in the biosynthesis of riboflavin.</text>
</comment>
<comment type="catalytic activity">
    <reaction evidence="1">
        <text>(2S)-2-hydroxy-3-oxobutyl phosphate + 5-amino-6-(D-ribitylamino)uracil = 6,7-dimethyl-8-(1-D-ribityl)lumazine + phosphate + 2 H2O + H(+)</text>
        <dbReference type="Rhea" id="RHEA:26152"/>
        <dbReference type="ChEBI" id="CHEBI:15377"/>
        <dbReference type="ChEBI" id="CHEBI:15378"/>
        <dbReference type="ChEBI" id="CHEBI:15934"/>
        <dbReference type="ChEBI" id="CHEBI:43474"/>
        <dbReference type="ChEBI" id="CHEBI:58201"/>
        <dbReference type="ChEBI" id="CHEBI:58830"/>
        <dbReference type="EC" id="2.5.1.78"/>
    </reaction>
</comment>
<comment type="pathway">
    <text evidence="1">Cofactor biosynthesis; riboflavin biosynthesis; riboflavin from 2-hydroxy-3-oxobutyl phosphate and 5-amino-6-(D-ribitylamino)uracil: step 1/2.</text>
</comment>
<comment type="subunit">
    <text evidence="1">Forms an icosahedral capsid composed of 60 subunits, arranged as a dodecamer of pentamers.</text>
</comment>
<comment type="similarity">
    <text evidence="1">Belongs to the DMRL synthase family.</text>
</comment>
<feature type="chain" id="PRO_1000098182" description="6,7-dimethyl-8-ribityllumazine synthase">
    <location>
        <begin position="1"/>
        <end position="151"/>
    </location>
</feature>
<feature type="active site" description="Proton donor" evidence="1">
    <location>
        <position position="81"/>
    </location>
</feature>
<feature type="binding site" evidence="1">
    <location>
        <position position="15"/>
    </location>
    <ligand>
        <name>5-amino-6-(D-ribitylamino)uracil</name>
        <dbReference type="ChEBI" id="CHEBI:15934"/>
    </ligand>
</feature>
<feature type="binding site" evidence="1">
    <location>
        <begin position="49"/>
        <end position="51"/>
    </location>
    <ligand>
        <name>5-amino-6-(D-ribitylamino)uracil</name>
        <dbReference type="ChEBI" id="CHEBI:15934"/>
    </ligand>
</feature>
<feature type="binding site" evidence="1">
    <location>
        <begin position="73"/>
        <end position="75"/>
    </location>
    <ligand>
        <name>5-amino-6-(D-ribitylamino)uracil</name>
        <dbReference type="ChEBI" id="CHEBI:15934"/>
    </ligand>
</feature>
<feature type="binding site" evidence="1">
    <location>
        <begin position="78"/>
        <end position="79"/>
    </location>
    <ligand>
        <name>(2S)-2-hydroxy-3-oxobutyl phosphate</name>
        <dbReference type="ChEBI" id="CHEBI:58830"/>
    </ligand>
</feature>
<feature type="binding site" evidence="1">
    <location>
        <position position="106"/>
    </location>
    <ligand>
        <name>5-amino-6-(D-ribitylamino)uracil</name>
        <dbReference type="ChEBI" id="CHEBI:15934"/>
    </ligand>
</feature>
<feature type="binding site" evidence="1">
    <location>
        <position position="120"/>
    </location>
    <ligand>
        <name>(2S)-2-hydroxy-3-oxobutyl phosphate</name>
        <dbReference type="ChEBI" id="CHEBI:58830"/>
    </ligand>
</feature>
<keyword id="KW-0686">Riboflavin biosynthesis</keyword>
<keyword id="KW-0808">Transferase</keyword>
<gene>
    <name evidence="1" type="primary">ribH</name>
    <name type="ordered locus">CbuG_1356</name>
</gene>
<protein>
    <recommendedName>
        <fullName evidence="1">6,7-dimethyl-8-ribityllumazine synthase</fullName>
        <shortName evidence="1">DMRL synthase</shortName>
        <shortName evidence="1">LS</shortName>
        <shortName evidence="1">Lumazine synthase</shortName>
        <ecNumber evidence="1">2.5.1.78</ecNumber>
    </recommendedName>
</protein>
<organism>
    <name type="scientific">Coxiella burnetii (strain CbuG_Q212)</name>
    <name type="common">Coxiella burnetii (strain Q212)</name>
    <dbReference type="NCBI Taxonomy" id="434923"/>
    <lineage>
        <taxon>Bacteria</taxon>
        <taxon>Pseudomonadati</taxon>
        <taxon>Pseudomonadota</taxon>
        <taxon>Gammaproteobacteria</taxon>
        <taxon>Legionellales</taxon>
        <taxon>Coxiellaceae</taxon>
        <taxon>Coxiella</taxon>
    </lineage>
</organism>
<dbReference type="EC" id="2.5.1.78" evidence="1"/>
<dbReference type="EMBL" id="CP001019">
    <property type="protein sequence ID" value="ACJ18662.1"/>
    <property type="molecule type" value="Genomic_DNA"/>
</dbReference>
<dbReference type="RefSeq" id="WP_010957715.1">
    <property type="nucleotide sequence ID" value="NC_011527.1"/>
</dbReference>
<dbReference type="SMR" id="B6J134"/>
<dbReference type="KEGG" id="cbg:CbuG_1356"/>
<dbReference type="HOGENOM" id="CLU_089358_1_1_6"/>
<dbReference type="UniPathway" id="UPA00275">
    <property type="reaction ID" value="UER00404"/>
</dbReference>
<dbReference type="GO" id="GO:0005829">
    <property type="term" value="C:cytosol"/>
    <property type="evidence" value="ECO:0007669"/>
    <property type="project" value="TreeGrafter"/>
</dbReference>
<dbReference type="GO" id="GO:0009349">
    <property type="term" value="C:riboflavin synthase complex"/>
    <property type="evidence" value="ECO:0007669"/>
    <property type="project" value="InterPro"/>
</dbReference>
<dbReference type="GO" id="GO:0000906">
    <property type="term" value="F:6,7-dimethyl-8-ribityllumazine synthase activity"/>
    <property type="evidence" value="ECO:0007669"/>
    <property type="project" value="UniProtKB-UniRule"/>
</dbReference>
<dbReference type="GO" id="GO:0009231">
    <property type="term" value="P:riboflavin biosynthetic process"/>
    <property type="evidence" value="ECO:0007669"/>
    <property type="project" value="UniProtKB-UniRule"/>
</dbReference>
<dbReference type="CDD" id="cd09209">
    <property type="entry name" value="Lumazine_synthase-I"/>
    <property type="match status" value="1"/>
</dbReference>
<dbReference type="Gene3D" id="3.40.50.960">
    <property type="entry name" value="Lumazine/riboflavin synthase"/>
    <property type="match status" value="1"/>
</dbReference>
<dbReference type="HAMAP" id="MF_00178">
    <property type="entry name" value="Lumazine_synth"/>
    <property type="match status" value="1"/>
</dbReference>
<dbReference type="InterPro" id="IPR034964">
    <property type="entry name" value="LS"/>
</dbReference>
<dbReference type="InterPro" id="IPR002180">
    <property type="entry name" value="LS/RS"/>
</dbReference>
<dbReference type="InterPro" id="IPR036467">
    <property type="entry name" value="LS/RS_sf"/>
</dbReference>
<dbReference type="NCBIfam" id="TIGR00114">
    <property type="entry name" value="lumazine-synth"/>
    <property type="match status" value="1"/>
</dbReference>
<dbReference type="PANTHER" id="PTHR21058:SF0">
    <property type="entry name" value="6,7-DIMETHYL-8-RIBITYLLUMAZINE SYNTHASE"/>
    <property type="match status" value="1"/>
</dbReference>
<dbReference type="PANTHER" id="PTHR21058">
    <property type="entry name" value="6,7-DIMETHYL-8-RIBITYLLUMAZINE SYNTHASE DMRL SYNTHASE LUMAZINE SYNTHASE"/>
    <property type="match status" value="1"/>
</dbReference>
<dbReference type="Pfam" id="PF00885">
    <property type="entry name" value="DMRL_synthase"/>
    <property type="match status" value="1"/>
</dbReference>
<dbReference type="SUPFAM" id="SSF52121">
    <property type="entry name" value="Lumazine synthase"/>
    <property type="match status" value="1"/>
</dbReference>
<evidence type="ECO:0000255" key="1">
    <source>
        <dbReference type="HAMAP-Rule" id="MF_00178"/>
    </source>
</evidence>
<reference key="1">
    <citation type="journal article" date="2009" name="Infect. Immun.">
        <title>Comparative genomics reveal extensive transposon-mediated genomic plasticity and diversity among potential effector proteins within the genus Coxiella.</title>
        <authorList>
            <person name="Beare P.A."/>
            <person name="Unsworth N."/>
            <person name="Andoh M."/>
            <person name="Voth D.E."/>
            <person name="Omsland A."/>
            <person name="Gilk S.D."/>
            <person name="Williams K.P."/>
            <person name="Sobral B.W."/>
            <person name="Kupko J.J. III"/>
            <person name="Porcella S.F."/>
            <person name="Samuel J.E."/>
            <person name="Heinzen R.A."/>
        </authorList>
    </citation>
    <scope>NUCLEOTIDE SEQUENCE [LARGE SCALE GENOMIC DNA]</scope>
    <source>
        <strain>CbuG_Q212</strain>
    </source>
</reference>
<sequence length="151" mass="16601">MTESSFKLAIVVSQFNRAVTEKLLNGVLQRLTELGVQANQIKTVWVPGAVEIPLLAKRLAKSKHYQAVVCLGAVIRGETDHYNYVCQQVSFGCQQVALEYEVPIIFGVLTTTTKEQAFARAGGERGNKGADWADAAVSMIKLMKEIEITDE</sequence>